<organism>
    <name type="scientific">Bifidobacterium longum (strain DJO10A)</name>
    <dbReference type="NCBI Taxonomy" id="205913"/>
    <lineage>
        <taxon>Bacteria</taxon>
        <taxon>Bacillati</taxon>
        <taxon>Actinomycetota</taxon>
        <taxon>Actinomycetes</taxon>
        <taxon>Bifidobacteriales</taxon>
        <taxon>Bifidobacteriaceae</taxon>
        <taxon>Bifidobacterium</taxon>
    </lineage>
</organism>
<comment type="function">
    <text evidence="1">Catalyzes the hydrolysis of the adenine ring of phosphoribosyl-AMP.</text>
</comment>
<comment type="catalytic activity">
    <reaction evidence="1">
        <text>1-(5-phospho-beta-D-ribosyl)-5'-AMP + H2O = 1-(5-phospho-beta-D-ribosyl)-5-[(5-phospho-beta-D-ribosylamino)methylideneamino]imidazole-4-carboxamide</text>
        <dbReference type="Rhea" id="RHEA:20049"/>
        <dbReference type="ChEBI" id="CHEBI:15377"/>
        <dbReference type="ChEBI" id="CHEBI:58435"/>
        <dbReference type="ChEBI" id="CHEBI:59457"/>
        <dbReference type="EC" id="3.5.4.19"/>
    </reaction>
</comment>
<comment type="cofactor">
    <cofactor evidence="1">
        <name>Mg(2+)</name>
        <dbReference type="ChEBI" id="CHEBI:18420"/>
    </cofactor>
    <text evidence="1">Binds 1 Mg(2+) ion per subunit.</text>
</comment>
<comment type="cofactor">
    <cofactor evidence="1">
        <name>Zn(2+)</name>
        <dbReference type="ChEBI" id="CHEBI:29105"/>
    </cofactor>
    <text evidence="1">Binds 1 zinc ion per subunit.</text>
</comment>
<comment type="pathway">
    <text evidence="1">Amino-acid biosynthesis; L-histidine biosynthesis; L-histidine from 5-phospho-alpha-D-ribose 1-diphosphate: step 3/9.</text>
</comment>
<comment type="subunit">
    <text evidence="1">Homodimer.</text>
</comment>
<comment type="subcellular location">
    <subcellularLocation>
        <location evidence="1">Cytoplasm</location>
    </subcellularLocation>
</comment>
<comment type="similarity">
    <text evidence="1">Belongs to the PRA-CH family.</text>
</comment>
<dbReference type="EC" id="3.5.4.19" evidence="1"/>
<dbReference type="EMBL" id="CP000605">
    <property type="protein sequence ID" value="ACD97858.1"/>
    <property type="molecule type" value="Genomic_DNA"/>
</dbReference>
<dbReference type="RefSeq" id="WP_007052762.1">
    <property type="nucleotide sequence ID" value="NC_010816.1"/>
</dbReference>
<dbReference type="SMR" id="B3DRT9"/>
<dbReference type="GeneID" id="69578349"/>
<dbReference type="KEGG" id="blj:BLD_0412"/>
<dbReference type="HOGENOM" id="CLU_048577_5_1_11"/>
<dbReference type="UniPathway" id="UPA00031">
    <property type="reaction ID" value="UER00008"/>
</dbReference>
<dbReference type="Proteomes" id="UP000002419">
    <property type="component" value="Chromosome"/>
</dbReference>
<dbReference type="GO" id="GO:0005737">
    <property type="term" value="C:cytoplasm"/>
    <property type="evidence" value="ECO:0007669"/>
    <property type="project" value="UniProtKB-SubCell"/>
</dbReference>
<dbReference type="GO" id="GO:0000287">
    <property type="term" value="F:magnesium ion binding"/>
    <property type="evidence" value="ECO:0007669"/>
    <property type="project" value="UniProtKB-UniRule"/>
</dbReference>
<dbReference type="GO" id="GO:0004635">
    <property type="term" value="F:phosphoribosyl-AMP cyclohydrolase activity"/>
    <property type="evidence" value="ECO:0007669"/>
    <property type="project" value="UniProtKB-UniRule"/>
</dbReference>
<dbReference type="GO" id="GO:0008270">
    <property type="term" value="F:zinc ion binding"/>
    <property type="evidence" value="ECO:0007669"/>
    <property type="project" value="UniProtKB-UniRule"/>
</dbReference>
<dbReference type="GO" id="GO:0000105">
    <property type="term" value="P:L-histidine biosynthetic process"/>
    <property type="evidence" value="ECO:0007669"/>
    <property type="project" value="UniProtKB-UniRule"/>
</dbReference>
<dbReference type="FunFam" id="3.10.20.810:FF:000001">
    <property type="entry name" value="Histidine biosynthesis bifunctional protein HisIE"/>
    <property type="match status" value="1"/>
</dbReference>
<dbReference type="Gene3D" id="3.10.20.810">
    <property type="entry name" value="Phosphoribosyl-AMP cyclohydrolase"/>
    <property type="match status" value="1"/>
</dbReference>
<dbReference type="HAMAP" id="MF_01021">
    <property type="entry name" value="HisI"/>
    <property type="match status" value="1"/>
</dbReference>
<dbReference type="InterPro" id="IPR026660">
    <property type="entry name" value="PRA-CH"/>
</dbReference>
<dbReference type="InterPro" id="IPR002496">
    <property type="entry name" value="PRib_AMP_CycHydrolase_dom"/>
</dbReference>
<dbReference type="InterPro" id="IPR038019">
    <property type="entry name" value="PRib_AMP_CycHydrolase_sf"/>
</dbReference>
<dbReference type="NCBIfam" id="NF000768">
    <property type="entry name" value="PRK00051.1"/>
    <property type="match status" value="1"/>
</dbReference>
<dbReference type="PANTHER" id="PTHR42945">
    <property type="entry name" value="HISTIDINE BIOSYNTHESIS BIFUNCTIONAL PROTEIN"/>
    <property type="match status" value="1"/>
</dbReference>
<dbReference type="PANTHER" id="PTHR42945:SF11">
    <property type="entry name" value="PHOSPHORIBOSYL-AMP CYCLOHYDROLASE"/>
    <property type="match status" value="1"/>
</dbReference>
<dbReference type="Pfam" id="PF01502">
    <property type="entry name" value="PRA-CH"/>
    <property type="match status" value="1"/>
</dbReference>
<dbReference type="SUPFAM" id="SSF141734">
    <property type="entry name" value="HisI-like"/>
    <property type="match status" value="1"/>
</dbReference>
<protein>
    <recommendedName>
        <fullName evidence="1">Phosphoribosyl-AMP cyclohydrolase</fullName>
        <shortName evidence="1">PRA-CH</shortName>
        <ecNumber evidence="1">3.5.4.19</ecNumber>
    </recommendedName>
</protein>
<name>HIS3_BIFLD</name>
<keyword id="KW-0028">Amino-acid biosynthesis</keyword>
<keyword id="KW-0963">Cytoplasm</keyword>
<keyword id="KW-0368">Histidine biosynthesis</keyword>
<keyword id="KW-0378">Hydrolase</keyword>
<keyword id="KW-0460">Magnesium</keyword>
<keyword id="KW-0479">Metal-binding</keyword>
<keyword id="KW-0862">Zinc</keyword>
<gene>
    <name evidence="1" type="primary">hisI</name>
    <name type="ordered locus">BLD_0412</name>
</gene>
<accession>B3DRT9</accession>
<proteinExistence type="inferred from homology"/>
<reference key="1">
    <citation type="journal article" date="2008" name="BMC Genomics">
        <title>Comparative genomic analysis of the gut bacterium Bifidobacterium longum reveals loci susceptible to deletion during pure culture growth.</title>
        <authorList>
            <person name="Lee J.H."/>
            <person name="Karamychev V.N."/>
            <person name="Kozyavkin S.A."/>
            <person name="Mills D."/>
            <person name="Pavlov A.R."/>
            <person name="Pavlova N.V."/>
            <person name="Polouchine N.N."/>
            <person name="Richardson P.M."/>
            <person name="Shakhova V.V."/>
            <person name="Slesarev A.I."/>
            <person name="Weimer B."/>
            <person name="O'Sullivan D.J."/>
        </authorList>
    </citation>
    <scope>NUCLEOTIDE SEQUENCE [LARGE SCALE GENOMIC DNA]</scope>
    <source>
        <strain>DJO10A</strain>
    </source>
</reference>
<feature type="chain" id="PRO_1000135334" description="Phosphoribosyl-AMP cyclohydrolase">
    <location>
        <begin position="1"/>
        <end position="131"/>
    </location>
</feature>
<feature type="binding site" evidence="1">
    <location>
        <position position="89"/>
    </location>
    <ligand>
        <name>Mg(2+)</name>
        <dbReference type="ChEBI" id="CHEBI:18420"/>
    </ligand>
</feature>
<feature type="binding site" evidence="1">
    <location>
        <position position="90"/>
    </location>
    <ligand>
        <name>Zn(2+)</name>
        <dbReference type="ChEBI" id="CHEBI:29105"/>
        <note>ligand shared between dimeric partners</note>
    </ligand>
</feature>
<feature type="binding site" evidence="1">
    <location>
        <position position="91"/>
    </location>
    <ligand>
        <name>Mg(2+)</name>
        <dbReference type="ChEBI" id="CHEBI:18420"/>
    </ligand>
</feature>
<feature type="binding site" evidence="1">
    <location>
        <position position="93"/>
    </location>
    <ligand>
        <name>Mg(2+)</name>
        <dbReference type="ChEBI" id="CHEBI:18420"/>
    </ligand>
</feature>
<feature type="binding site" evidence="1">
    <location>
        <position position="106"/>
    </location>
    <ligand>
        <name>Zn(2+)</name>
        <dbReference type="ChEBI" id="CHEBI:29105"/>
        <note>ligand shared between dimeric partners</note>
    </ligand>
</feature>
<feature type="binding site" evidence="1">
    <location>
        <position position="113"/>
    </location>
    <ligand>
        <name>Zn(2+)</name>
        <dbReference type="ChEBI" id="CHEBI:29105"/>
        <note>ligand shared between dimeric partners</note>
    </ligand>
</feature>
<evidence type="ECO:0000255" key="1">
    <source>
        <dbReference type="HAMAP-Rule" id="MF_01021"/>
    </source>
</evidence>
<sequence length="131" mass="14604">MTDTTYDNSTELDPRIAARLKRDAKGLVAAVIQQYDTREVLMVGYMNDEALRRTLTTGRVTFWSRSRQEYWRKGDTSGHVQYVKGVSLDCDGDALLVEVDQVGAACHTGKRSCFLEGGPLPVVEGHRPAEQ</sequence>